<organism>
    <name type="scientific">Shewanella woodyi (strain ATCC 51908 / MS32)</name>
    <dbReference type="NCBI Taxonomy" id="392500"/>
    <lineage>
        <taxon>Bacteria</taxon>
        <taxon>Pseudomonadati</taxon>
        <taxon>Pseudomonadota</taxon>
        <taxon>Gammaproteobacteria</taxon>
        <taxon>Alteromonadales</taxon>
        <taxon>Shewanellaceae</taxon>
        <taxon>Shewanella</taxon>
    </lineage>
</organism>
<evidence type="ECO:0000255" key="1">
    <source>
        <dbReference type="HAMAP-Rule" id="MF_01849"/>
    </source>
</evidence>
<evidence type="ECO:0000255" key="2">
    <source>
        <dbReference type="PROSITE-ProRule" id="PRU01266"/>
    </source>
</evidence>
<accession>B1KKI9</accession>
<feature type="chain" id="PRO_0000350408" description="Dual-specificity RNA methyltransferase RlmN">
    <location>
        <begin position="1"/>
        <end position="373"/>
    </location>
</feature>
<feature type="domain" description="Radical SAM core" evidence="2">
    <location>
        <begin position="100"/>
        <end position="339"/>
    </location>
</feature>
<feature type="active site" description="Proton acceptor" evidence="1">
    <location>
        <position position="94"/>
    </location>
</feature>
<feature type="active site" description="S-methylcysteine intermediate" evidence="1">
    <location>
        <position position="344"/>
    </location>
</feature>
<feature type="binding site" evidence="1">
    <location>
        <position position="114"/>
    </location>
    <ligand>
        <name>[4Fe-4S] cluster</name>
        <dbReference type="ChEBI" id="CHEBI:49883"/>
        <note>4Fe-4S-S-AdoMet</note>
    </ligand>
</feature>
<feature type="binding site" evidence="1">
    <location>
        <position position="118"/>
    </location>
    <ligand>
        <name>[4Fe-4S] cluster</name>
        <dbReference type="ChEBI" id="CHEBI:49883"/>
        <note>4Fe-4S-S-AdoMet</note>
    </ligand>
</feature>
<feature type="binding site" evidence="1">
    <location>
        <position position="121"/>
    </location>
    <ligand>
        <name>[4Fe-4S] cluster</name>
        <dbReference type="ChEBI" id="CHEBI:49883"/>
        <note>4Fe-4S-S-AdoMet</note>
    </ligand>
</feature>
<feature type="binding site" evidence="1">
    <location>
        <begin position="168"/>
        <end position="169"/>
    </location>
    <ligand>
        <name>S-adenosyl-L-methionine</name>
        <dbReference type="ChEBI" id="CHEBI:59789"/>
    </ligand>
</feature>
<feature type="binding site" evidence="1">
    <location>
        <position position="200"/>
    </location>
    <ligand>
        <name>S-adenosyl-L-methionine</name>
        <dbReference type="ChEBI" id="CHEBI:59789"/>
    </ligand>
</feature>
<feature type="binding site" evidence="1">
    <location>
        <begin position="222"/>
        <end position="224"/>
    </location>
    <ligand>
        <name>S-adenosyl-L-methionine</name>
        <dbReference type="ChEBI" id="CHEBI:59789"/>
    </ligand>
</feature>
<feature type="binding site" evidence="1">
    <location>
        <position position="301"/>
    </location>
    <ligand>
        <name>S-adenosyl-L-methionine</name>
        <dbReference type="ChEBI" id="CHEBI:59789"/>
    </ligand>
</feature>
<feature type="disulfide bond" description="(transient)" evidence="1">
    <location>
        <begin position="107"/>
        <end position="344"/>
    </location>
</feature>
<proteinExistence type="inferred from homology"/>
<name>RLMN_SHEWM</name>
<dbReference type="EC" id="2.1.1.192" evidence="1"/>
<dbReference type="EMBL" id="CP000961">
    <property type="protein sequence ID" value="ACA85829.1"/>
    <property type="molecule type" value="Genomic_DNA"/>
</dbReference>
<dbReference type="RefSeq" id="WP_012324175.1">
    <property type="nucleotide sequence ID" value="NC_010506.1"/>
</dbReference>
<dbReference type="SMR" id="B1KKI9"/>
<dbReference type="STRING" id="392500.Swoo_1541"/>
<dbReference type="KEGG" id="swd:Swoo_1541"/>
<dbReference type="eggNOG" id="COG0820">
    <property type="taxonomic scope" value="Bacteria"/>
</dbReference>
<dbReference type="HOGENOM" id="CLU_029101_0_0_6"/>
<dbReference type="Proteomes" id="UP000002168">
    <property type="component" value="Chromosome"/>
</dbReference>
<dbReference type="GO" id="GO:0005737">
    <property type="term" value="C:cytoplasm"/>
    <property type="evidence" value="ECO:0007669"/>
    <property type="project" value="UniProtKB-SubCell"/>
</dbReference>
<dbReference type="GO" id="GO:0051539">
    <property type="term" value="F:4 iron, 4 sulfur cluster binding"/>
    <property type="evidence" value="ECO:0007669"/>
    <property type="project" value="UniProtKB-UniRule"/>
</dbReference>
<dbReference type="GO" id="GO:0046872">
    <property type="term" value="F:metal ion binding"/>
    <property type="evidence" value="ECO:0007669"/>
    <property type="project" value="UniProtKB-KW"/>
</dbReference>
<dbReference type="GO" id="GO:0070040">
    <property type="term" value="F:rRNA (adenine(2503)-C2-)-methyltransferase activity"/>
    <property type="evidence" value="ECO:0007669"/>
    <property type="project" value="UniProtKB-UniRule"/>
</dbReference>
<dbReference type="GO" id="GO:0019843">
    <property type="term" value="F:rRNA binding"/>
    <property type="evidence" value="ECO:0007669"/>
    <property type="project" value="UniProtKB-UniRule"/>
</dbReference>
<dbReference type="GO" id="GO:0002935">
    <property type="term" value="F:tRNA (adenine(37)-C2)-methyltransferase activity"/>
    <property type="evidence" value="ECO:0007669"/>
    <property type="project" value="UniProtKB-UniRule"/>
</dbReference>
<dbReference type="GO" id="GO:0000049">
    <property type="term" value="F:tRNA binding"/>
    <property type="evidence" value="ECO:0007669"/>
    <property type="project" value="UniProtKB-UniRule"/>
</dbReference>
<dbReference type="GO" id="GO:0070475">
    <property type="term" value="P:rRNA base methylation"/>
    <property type="evidence" value="ECO:0007669"/>
    <property type="project" value="UniProtKB-UniRule"/>
</dbReference>
<dbReference type="GO" id="GO:0030488">
    <property type="term" value="P:tRNA methylation"/>
    <property type="evidence" value="ECO:0007669"/>
    <property type="project" value="UniProtKB-UniRule"/>
</dbReference>
<dbReference type="CDD" id="cd01335">
    <property type="entry name" value="Radical_SAM"/>
    <property type="match status" value="1"/>
</dbReference>
<dbReference type="FunFam" id="1.10.150.530:FF:000003">
    <property type="entry name" value="Dual-specificity RNA methyltransferase RlmN"/>
    <property type="match status" value="1"/>
</dbReference>
<dbReference type="FunFam" id="3.20.20.70:FF:000008">
    <property type="entry name" value="Dual-specificity RNA methyltransferase RlmN"/>
    <property type="match status" value="1"/>
</dbReference>
<dbReference type="Gene3D" id="1.10.150.530">
    <property type="match status" value="1"/>
</dbReference>
<dbReference type="Gene3D" id="3.20.20.70">
    <property type="entry name" value="Aldolase class I"/>
    <property type="match status" value="1"/>
</dbReference>
<dbReference type="HAMAP" id="MF_01849">
    <property type="entry name" value="RNA_methyltr_RlmN"/>
    <property type="match status" value="1"/>
</dbReference>
<dbReference type="InterPro" id="IPR013785">
    <property type="entry name" value="Aldolase_TIM"/>
</dbReference>
<dbReference type="InterPro" id="IPR040072">
    <property type="entry name" value="Methyltransferase_A"/>
</dbReference>
<dbReference type="InterPro" id="IPR048641">
    <property type="entry name" value="RlmN_N"/>
</dbReference>
<dbReference type="InterPro" id="IPR027492">
    <property type="entry name" value="RNA_MTrfase_RlmN"/>
</dbReference>
<dbReference type="InterPro" id="IPR004383">
    <property type="entry name" value="rRNA_lsu_MTrfase_RlmN/Cfr"/>
</dbReference>
<dbReference type="InterPro" id="IPR007197">
    <property type="entry name" value="rSAM"/>
</dbReference>
<dbReference type="NCBIfam" id="NF008396">
    <property type="entry name" value="PRK11194.1"/>
    <property type="match status" value="1"/>
</dbReference>
<dbReference type="NCBIfam" id="TIGR00048">
    <property type="entry name" value="rRNA_mod_RlmN"/>
    <property type="match status" value="1"/>
</dbReference>
<dbReference type="PANTHER" id="PTHR30544">
    <property type="entry name" value="23S RRNA METHYLTRANSFERASE"/>
    <property type="match status" value="1"/>
</dbReference>
<dbReference type="PANTHER" id="PTHR30544:SF5">
    <property type="entry name" value="RADICAL SAM CORE DOMAIN-CONTAINING PROTEIN"/>
    <property type="match status" value="1"/>
</dbReference>
<dbReference type="Pfam" id="PF04055">
    <property type="entry name" value="Radical_SAM"/>
    <property type="match status" value="1"/>
</dbReference>
<dbReference type="Pfam" id="PF21016">
    <property type="entry name" value="RlmN_N"/>
    <property type="match status" value="1"/>
</dbReference>
<dbReference type="PIRSF" id="PIRSF006004">
    <property type="entry name" value="CHP00048"/>
    <property type="match status" value="1"/>
</dbReference>
<dbReference type="SFLD" id="SFLDF00275">
    <property type="entry name" value="adenosine_C2_methyltransferase"/>
    <property type="match status" value="1"/>
</dbReference>
<dbReference type="SFLD" id="SFLDS00029">
    <property type="entry name" value="Radical_SAM"/>
    <property type="match status" value="1"/>
</dbReference>
<dbReference type="SUPFAM" id="SSF102114">
    <property type="entry name" value="Radical SAM enzymes"/>
    <property type="match status" value="1"/>
</dbReference>
<dbReference type="PROSITE" id="PS51918">
    <property type="entry name" value="RADICAL_SAM"/>
    <property type="match status" value="1"/>
</dbReference>
<reference key="1">
    <citation type="submission" date="2008-02" db="EMBL/GenBank/DDBJ databases">
        <title>Complete sequence of Shewanella woodyi ATCC 51908.</title>
        <authorList>
            <consortium name="US DOE Joint Genome Institute"/>
            <person name="Copeland A."/>
            <person name="Lucas S."/>
            <person name="Lapidus A."/>
            <person name="Glavina del Rio T."/>
            <person name="Dalin E."/>
            <person name="Tice H."/>
            <person name="Bruce D."/>
            <person name="Goodwin L."/>
            <person name="Pitluck S."/>
            <person name="Sims D."/>
            <person name="Brettin T."/>
            <person name="Detter J.C."/>
            <person name="Han C."/>
            <person name="Kuske C.R."/>
            <person name="Schmutz J."/>
            <person name="Larimer F."/>
            <person name="Land M."/>
            <person name="Hauser L."/>
            <person name="Kyrpides N."/>
            <person name="Lykidis A."/>
            <person name="Zhao J.-S."/>
            <person name="Richardson P."/>
        </authorList>
    </citation>
    <scope>NUCLEOTIDE SEQUENCE [LARGE SCALE GENOMIC DNA]</scope>
    <source>
        <strain>ATCC 51908 / MS32</strain>
    </source>
</reference>
<protein>
    <recommendedName>
        <fullName evidence="1">Dual-specificity RNA methyltransferase RlmN</fullName>
        <ecNumber evidence="1">2.1.1.192</ecNumber>
    </recommendedName>
    <alternativeName>
        <fullName evidence="1">23S rRNA (adenine(2503)-C(2))-methyltransferase</fullName>
    </alternativeName>
    <alternativeName>
        <fullName evidence="1">23S rRNA m2A2503 methyltransferase</fullName>
    </alternativeName>
    <alternativeName>
        <fullName evidence="1">Ribosomal RNA large subunit methyltransferase N</fullName>
    </alternativeName>
    <alternativeName>
        <fullName evidence="1">tRNA (adenine(37)-C(2))-methyltransferase</fullName>
    </alternativeName>
    <alternativeName>
        <fullName evidence="1">tRNA m2A37 methyltransferase</fullName>
    </alternativeName>
</protein>
<gene>
    <name evidence="1" type="primary">rlmN</name>
    <name type="ordered locus">Swoo_1541</name>
</gene>
<keyword id="KW-0004">4Fe-4S</keyword>
<keyword id="KW-0963">Cytoplasm</keyword>
<keyword id="KW-1015">Disulfide bond</keyword>
<keyword id="KW-0408">Iron</keyword>
<keyword id="KW-0411">Iron-sulfur</keyword>
<keyword id="KW-0479">Metal-binding</keyword>
<keyword id="KW-0489">Methyltransferase</keyword>
<keyword id="KW-1185">Reference proteome</keyword>
<keyword id="KW-0698">rRNA processing</keyword>
<keyword id="KW-0949">S-adenosyl-L-methionine</keyword>
<keyword id="KW-0808">Transferase</keyword>
<keyword id="KW-0819">tRNA processing</keyword>
<sequence>MSEKKINLLDLDRKGLRALFTEMGEKPFRADQLMKWIYHFGVSDFDEMNNINKALRAKLNARCEIVAPEISSFQKSEDGTIKFAINVGQGQEVETVYIPEDDRATLCVSSQVGCALECTFCSTAQQGFNRNLTVSEIIGQVWRVADFIGFVKETGERPITNVVMMGMGEPLLNLKNVIPAMDIMLDDFGFSLSKRRVTVSTSGVVPALDKLGDALDVALAVSIHAPNDELRDVLVPVNKKYPLEEFLGGIRRYIAKSNANRGRVTVEYVMLDHINDSTDQAHELAKLMKDTPCKINLIPFNPYPGSPYGRSSNSRIDRFSKVLMEYGLTVIVRKTRGDDIDAACGQLAGDIRDRTKRLAKKRMQDSQISVTIN</sequence>
<comment type="function">
    <text evidence="1">Specifically methylates position 2 of adenine 2503 in 23S rRNA and position 2 of adenine 37 in tRNAs. m2A2503 modification seems to play a crucial role in the proofreading step occurring at the peptidyl transferase center and thus would serve to optimize ribosomal fidelity.</text>
</comment>
<comment type="catalytic activity">
    <reaction evidence="1">
        <text>adenosine(2503) in 23S rRNA + 2 reduced [2Fe-2S]-[ferredoxin] + 2 S-adenosyl-L-methionine = 2-methyladenosine(2503) in 23S rRNA + 5'-deoxyadenosine + L-methionine + 2 oxidized [2Fe-2S]-[ferredoxin] + S-adenosyl-L-homocysteine</text>
        <dbReference type="Rhea" id="RHEA:42916"/>
        <dbReference type="Rhea" id="RHEA-COMP:10000"/>
        <dbReference type="Rhea" id="RHEA-COMP:10001"/>
        <dbReference type="Rhea" id="RHEA-COMP:10152"/>
        <dbReference type="Rhea" id="RHEA-COMP:10282"/>
        <dbReference type="ChEBI" id="CHEBI:17319"/>
        <dbReference type="ChEBI" id="CHEBI:33737"/>
        <dbReference type="ChEBI" id="CHEBI:33738"/>
        <dbReference type="ChEBI" id="CHEBI:57844"/>
        <dbReference type="ChEBI" id="CHEBI:57856"/>
        <dbReference type="ChEBI" id="CHEBI:59789"/>
        <dbReference type="ChEBI" id="CHEBI:74411"/>
        <dbReference type="ChEBI" id="CHEBI:74497"/>
        <dbReference type="EC" id="2.1.1.192"/>
    </reaction>
</comment>
<comment type="catalytic activity">
    <reaction evidence="1">
        <text>adenosine(37) in tRNA + 2 reduced [2Fe-2S]-[ferredoxin] + 2 S-adenosyl-L-methionine = 2-methyladenosine(37) in tRNA + 5'-deoxyadenosine + L-methionine + 2 oxidized [2Fe-2S]-[ferredoxin] + S-adenosyl-L-homocysteine</text>
        <dbReference type="Rhea" id="RHEA:43332"/>
        <dbReference type="Rhea" id="RHEA-COMP:10000"/>
        <dbReference type="Rhea" id="RHEA-COMP:10001"/>
        <dbReference type="Rhea" id="RHEA-COMP:10162"/>
        <dbReference type="Rhea" id="RHEA-COMP:10485"/>
        <dbReference type="ChEBI" id="CHEBI:17319"/>
        <dbReference type="ChEBI" id="CHEBI:33737"/>
        <dbReference type="ChEBI" id="CHEBI:33738"/>
        <dbReference type="ChEBI" id="CHEBI:57844"/>
        <dbReference type="ChEBI" id="CHEBI:57856"/>
        <dbReference type="ChEBI" id="CHEBI:59789"/>
        <dbReference type="ChEBI" id="CHEBI:74411"/>
        <dbReference type="ChEBI" id="CHEBI:74497"/>
        <dbReference type="EC" id="2.1.1.192"/>
    </reaction>
</comment>
<comment type="cofactor">
    <cofactor evidence="1">
        <name>[4Fe-4S] cluster</name>
        <dbReference type="ChEBI" id="CHEBI:49883"/>
    </cofactor>
    <text evidence="1">Binds 1 [4Fe-4S] cluster. The cluster is coordinated with 3 cysteines and an exchangeable S-adenosyl-L-methionine.</text>
</comment>
<comment type="subcellular location">
    <subcellularLocation>
        <location evidence="1">Cytoplasm</location>
    </subcellularLocation>
</comment>
<comment type="miscellaneous">
    <text evidence="1">Reaction proceeds by a ping-pong mechanism involving intermediate methylation of a conserved cysteine residue.</text>
</comment>
<comment type="similarity">
    <text evidence="1">Belongs to the radical SAM superfamily. RlmN family.</text>
</comment>